<dbReference type="EMBL" id="EF583016">
    <property type="protein sequence ID" value="ABU87825.1"/>
    <property type="molecule type" value="Genomic_RNA"/>
</dbReference>
<dbReference type="SMR" id="B1NKQ8"/>
<dbReference type="Proteomes" id="UP000001455">
    <property type="component" value="Genome"/>
</dbReference>
<dbReference type="GO" id="GO:0019031">
    <property type="term" value="C:viral envelope"/>
    <property type="evidence" value="ECO:0007669"/>
    <property type="project" value="UniProtKB-UniRule"/>
</dbReference>
<dbReference type="GO" id="GO:0039626">
    <property type="term" value="C:viral intermediate capsid"/>
    <property type="evidence" value="ECO:0007669"/>
    <property type="project" value="UniProtKB-UniRule"/>
</dbReference>
<dbReference type="GO" id="GO:0046789">
    <property type="term" value="F:host cell surface receptor binding"/>
    <property type="evidence" value="ECO:0007669"/>
    <property type="project" value="UniProtKB-UniRule"/>
</dbReference>
<dbReference type="GO" id="GO:0046872">
    <property type="term" value="F:metal ion binding"/>
    <property type="evidence" value="ECO:0007669"/>
    <property type="project" value="UniProtKB-UniRule"/>
</dbReference>
<dbReference type="GO" id="GO:0005198">
    <property type="term" value="F:structural molecule activity"/>
    <property type="evidence" value="ECO:0007669"/>
    <property type="project" value="UniProtKB-UniRule"/>
</dbReference>
<dbReference type="GO" id="GO:0019064">
    <property type="term" value="P:fusion of virus membrane with host plasma membrane"/>
    <property type="evidence" value="ECO:0007669"/>
    <property type="project" value="UniProtKB-UniRule"/>
</dbReference>
<dbReference type="FunFam" id="2.60.120.170:FF:000001">
    <property type="entry name" value="Intermediate capsid protein VP6"/>
    <property type="match status" value="1"/>
</dbReference>
<dbReference type="Gene3D" id="2.60.120.170">
    <property type="match status" value="1"/>
</dbReference>
<dbReference type="Gene3D" id="1.10.1350.10">
    <property type="entry name" value="Viral capsid alpha domain"/>
    <property type="match status" value="1"/>
</dbReference>
<dbReference type="HAMAP" id="MF_04126">
    <property type="entry name" value="Rota_VP6"/>
    <property type="match status" value="1"/>
</dbReference>
<dbReference type="HAMAP" id="MF_04129">
    <property type="entry name" value="Rota_VP6_A"/>
    <property type="match status" value="1"/>
</dbReference>
<dbReference type="InterPro" id="IPR008980">
    <property type="entry name" value="Capsid_hemagglutn"/>
</dbReference>
<dbReference type="InterPro" id="IPR001385">
    <property type="entry name" value="Rotavirus_A/C_VP6"/>
</dbReference>
<dbReference type="InterPro" id="IPR008935">
    <property type="entry name" value="Virus_capsid_a-hlx_vir"/>
</dbReference>
<dbReference type="Pfam" id="PF00980">
    <property type="entry name" value="Rota_Capsid_VP6"/>
    <property type="match status" value="1"/>
</dbReference>
<dbReference type="SUPFAM" id="SSF48345">
    <property type="entry name" value="A virus capsid protein alpha-helical domain"/>
    <property type="match status" value="1"/>
</dbReference>
<dbReference type="SUPFAM" id="SSF49818">
    <property type="entry name" value="Viral protein domain"/>
    <property type="match status" value="1"/>
</dbReference>
<proteinExistence type="inferred from homology"/>
<organism>
    <name type="scientific">Rotavirus A (strain RVA/Human/Indonesia/69M/1980/G8P4[10])</name>
    <name type="common">RV-A</name>
    <dbReference type="NCBI Taxonomy" id="10947"/>
    <lineage>
        <taxon>Viruses</taxon>
        <taxon>Riboviria</taxon>
        <taxon>Orthornavirae</taxon>
        <taxon>Duplornaviricota</taxon>
        <taxon>Resentoviricetes</taxon>
        <taxon>Reovirales</taxon>
        <taxon>Sedoreoviridae</taxon>
        <taxon>Rotavirus</taxon>
        <taxon>Rotavirus A</taxon>
    </lineage>
</organism>
<organismHost>
    <name type="scientific">Homo sapiens</name>
    <name type="common">Human</name>
    <dbReference type="NCBI Taxonomy" id="9606"/>
</organismHost>
<feature type="chain" id="PRO_0000368175" description="Intermediate capsid protein VP6">
    <location>
        <begin position="1"/>
        <end position="397"/>
    </location>
</feature>
<feature type="region of interest" description="Interaction with the inner capsid protein VP2" evidence="1">
    <location>
        <begin position="62"/>
        <end position="73"/>
    </location>
</feature>
<feature type="binding site" evidence="1">
    <location>
        <position position="153"/>
    </location>
    <ligand>
        <name>Zn(2+)</name>
        <dbReference type="ChEBI" id="CHEBI:29105"/>
        <note>ligand shared between all trimeric partners</note>
    </ligand>
</feature>
<feature type="binding site" evidence="1">
    <location>
        <position position="266"/>
    </location>
    <ligand>
        <name>Ca(2+)</name>
        <dbReference type="ChEBI" id="CHEBI:29108"/>
    </ligand>
</feature>
<feature type="binding site" evidence="1">
    <location>
        <position position="286"/>
    </location>
    <ligand>
        <name>Ca(2+)</name>
        <dbReference type="ChEBI" id="CHEBI:29108"/>
    </ligand>
</feature>
<name>VP6_ROTH6</name>
<protein>
    <recommendedName>
        <fullName evidence="1">Intermediate capsid protein VP6</fullName>
    </recommendedName>
</protein>
<evidence type="ECO:0000255" key="1">
    <source>
        <dbReference type="HAMAP-Rule" id="MF_04129"/>
    </source>
</evidence>
<reference key="1">
    <citation type="journal article" date="2008" name="J. Virol.">
        <title>Full genome-based classification of rotaviruses reveals a common origin between human Wa-Like and porcine rotavirus strains and human DS-1-like and bovine rotavirus strains.</title>
        <authorList>
            <person name="Matthijnssens J."/>
            <person name="Ciarlet M."/>
            <person name="Heiman E.M."/>
            <person name="Arijs I."/>
            <person name="Delbeke T."/>
            <person name="McDonald S.M."/>
            <person name="Palombo E.A."/>
            <person name="Iturriza-Gomara M."/>
            <person name="Maes P."/>
            <person name="Patton J.T."/>
            <person name="Rahman M."/>
            <person name="Van Ranst M."/>
        </authorList>
    </citation>
    <scope>NUCLEOTIDE SEQUENCE [GENOMIC RNA]</scope>
</reference>
<comment type="function">
    <text evidence="1">Intermediate capsid protein that self assembles to form an icosahedral capsid with a T=13 symmetry, which consists of 230 trimers of VP6, with channels at each of its five-fold vertices. This capsid constitutes the middle concentric layer of the viral mature particle. The innermost VP2 capsid and the intermediate VP6 capsid remain intact following cell entry to protect the dsRNA from degradation and to prevent unfavorable antiviral responses in the host cell during all the replication cycle of the virus. Nascent transcripts are transcribed within the structural confines of this double-layered particle (DLP) and are extruded through the channels at the five-fold axes. VP6 is required for the transcription activity of the DLP.</text>
</comment>
<comment type="subunit">
    <text evidence="1">Homotrimer. Interacts with the inner capsid protein VP2. Interacts with the outer capsid glycoprotein VP7. Interacts with the outer capsid protein VP5*.</text>
</comment>
<comment type="subcellular location">
    <subcellularLocation>
        <location evidence="1">Virion</location>
    </subcellularLocation>
    <text evidence="1">Component of the intermediate capsid. Also found in spherical cytoplasmic structures, called virus factories, that appear early after infection and are the site of viral replication and packaging.</text>
</comment>
<comment type="PTM">
    <text evidence="1">The N-terminus is blocked.</text>
</comment>
<comment type="PTM">
    <text evidence="1">Sumoylated with SUMO1 and SUMO2. Sumoylation of viral proteins seems to have a positive role on viral replication.</text>
</comment>
<comment type="miscellaneous">
    <text evidence="1">The VP6 trimer contains a zinc ion located at the center of the molecule. The zinc ion is not essential for either trimerization or transcription activity of the DLP. Zinc-depleted VP6 has an increased sensitivity to proteases.</text>
</comment>
<comment type="similarity">
    <text evidence="1">Belongs to the rotavirus VP6 family.</text>
</comment>
<sequence>MDVLYSLSKTLKDARDKIVEGTLYSNVSDLIQQFNQMIITMNGTEFQTGGIGNLPIRNWNFGFGLLGTTLLNLDANYVETARNTIDYFVDFVDNVCMDEMVRESQRNGIAPQSDSLRKLSGIKFKRINFDNSSEYIENWNLQNRRQRTGFTFHKPNIFPYSASFTLNRSQPAHDNLMGTMWLNAGSEIQVAGFDYSCAINAPANTQQFEHIVQLRRVLTTATITLLPDAERFSFPRVINSADGATTWYFNPVILRPNNVEVEFLLNGQIINTYQARFGTIIARNFDTIRLSFQLMRPPNMTPAVAALFPNAQPFEHHATVGLTLRIESAVCESVLADASETMLANVTSVRQEYAIPVGPVFPPGMNWTDLITNYSPSREDNLQRVFTVASIRSMLVK</sequence>
<keyword id="KW-0106">Calcium</keyword>
<keyword id="KW-0167">Capsid protein</keyword>
<keyword id="KW-1154">Intermediate capsid protein</keyword>
<keyword id="KW-0479">Metal-binding</keyword>
<keyword id="KW-0832">Ubl conjugation</keyword>
<keyword id="KW-0946">Virion</keyword>
<keyword id="KW-0862">Zinc</keyword>
<accession>B1NKQ8</accession>